<gene>
    <name evidence="1" type="primary">iolB</name>
    <name type="ordered locus">lin0402</name>
</gene>
<feature type="chain" id="PRO_0000352390" description="5-deoxy-glucuronate isomerase">
    <location>
        <begin position="1"/>
        <end position="273"/>
    </location>
</feature>
<dbReference type="EC" id="5.3.1.30" evidence="1"/>
<dbReference type="EMBL" id="AL596164">
    <property type="protein sequence ID" value="CAC95635.1"/>
    <property type="molecule type" value="Genomic_DNA"/>
</dbReference>
<dbReference type="PIR" id="AC1483">
    <property type="entry name" value="AC1483"/>
</dbReference>
<dbReference type="RefSeq" id="WP_010990385.1">
    <property type="nucleotide sequence ID" value="NC_003212.1"/>
</dbReference>
<dbReference type="SMR" id="Q92EQ6"/>
<dbReference type="STRING" id="272626.gene:17564729"/>
<dbReference type="KEGG" id="lin:lin0402"/>
<dbReference type="eggNOG" id="COG3718">
    <property type="taxonomic scope" value="Bacteria"/>
</dbReference>
<dbReference type="HOGENOM" id="CLU_066438_1_0_9"/>
<dbReference type="OrthoDB" id="9799936at2"/>
<dbReference type="UniPathway" id="UPA00076">
    <property type="reaction ID" value="UER00920"/>
</dbReference>
<dbReference type="Proteomes" id="UP000002513">
    <property type="component" value="Chromosome"/>
</dbReference>
<dbReference type="GO" id="GO:0102482">
    <property type="term" value="F:5-deoxy-D-glucuronate isomerase activity"/>
    <property type="evidence" value="ECO:0007669"/>
    <property type="project" value="UniProtKB-EC"/>
</dbReference>
<dbReference type="GO" id="GO:0008880">
    <property type="term" value="F:glucuronate isomerase activity"/>
    <property type="evidence" value="ECO:0007669"/>
    <property type="project" value="InterPro"/>
</dbReference>
<dbReference type="GO" id="GO:0019310">
    <property type="term" value="P:inositol catabolic process"/>
    <property type="evidence" value="ECO:0007669"/>
    <property type="project" value="UniProtKB-UniRule"/>
</dbReference>
<dbReference type="Gene3D" id="2.60.120.10">
    <property type="entry name" value="Jelly Rolls"/>
    <property type="match status" value="2"/>
</dbReference>
<dbReference type="HAMAP" id="MF_01673">
    <property type="entry name" value="IolB"/>
    <property type="match status" value="1"/>
</dbReference>
<dbReference type="InterPro" id="IPR024203">
    <property type="entry name" value="Deoxy-glucuronate_isom_IolB"/>
</dbReference>
<dbReference type="InterPro" id="IPR023770">
    <property type="entry name" value="IolB_Bacilli"/>
</dbReference>
<dbReference type="InterPro" id="IPR021120">
    <property type="entry name" value="KduI/IolB_isomerase"/>
</dbReference>
<dbReference type="InterPro" id="IPR014710">
    <property type="entry name" value="RmlC-like_jellyroll"/>
</dbReference>
<dbReference type="InterPro" id="IPR011051">
    <property type="entry name" value="RmlC_Cupin_sf"/>
</dbReference>
<dbReference type="NCBIfam" id="TIGR04378">
    <property type="entry name" value="myo_inos_iolB"/>
    <property type="match status" value="1"/>
</dbReference>
<dbReference type="PANTHER" id="PTHR39193">
    <property type="entry name" value="5-DEOXY-GLUCURONATE ISOMERASE"/>
    <property type="match status" value="1"/>
</dbReference>
<dbReference type="PANTHER" id="PTHR39193:SF1">
    <property type="entry name" value="5-DEOXY-GLUCURONATE ISOMERASE"/>
    <property type="match status" value="1"/>
</dbReference>
<dbReference type="Pfam" id="PF04962">
    <property type="entry name" value="KduI"/>
    <property type="match status" value="1"/>
</dbReference>
<dbReference type="PIRSF" id="PIRSF036628">
    <property type="entry name" value="IolB"/>
    <property type="match status" value="1"/>
</dbReference>
<dbReference type="SUPFAM" id="SSF51182">
    <property type="entry name" value="RmlC-like cupins"/>
    <property type="match status" value="1"/>
</dbReference>
<organism>
    <name type="scientific">Listeria innocua serovar 6a (strain ATCC BAA-680 / CLIP 11262)</name>
    <dbReference type="NCBI Taxonomy" id="272626"/>
    <lineage>
        <taxon>Bacteria</taxon>
        <taxon>Bacillati</taxon>
        <taxon>Bacillota</taxon>
        <taxon>Bacilli</taxon>
        <taxon>Bacillales</taxon>
        <taxon>Listeriaceae</taxon>
        <taxon>Listeria</taxon>
    </lineage>
</organism>
<evidence type="ECO:0000255" key="1">
    <source>
        <dbReference type="HAMAP-Rule" id="MF_01673"/>
    </source>
</evidence>
<sequence>MGKLLRKPLNERIAPGVTLVQDINQGNSPLSYVGFRLIELEKGAVYQEALTDLECCIVALTGKITVSEGDDIFAEIGTRANVFEKIPTDSVFISGGRAFQVKADTEKARVALCYSPANRDLPTTLIKASDNSIEQRGKYQNKRLVHNILPDVSGVASSLLVVEVYTNGGNFSSYPPHKHDRDNLPAESLLEESYYHEINPEQGFIFQRVYTDDRALDETMAVEHQNAVIVPEGYHPVGVPDGYDSYYLNVMAGPKRVWKFHNDPDHEWILERD</sequence>
<proteinExistence type="inferred from homology"/>
<keyword id="KW-0413">Isomerase</keyword>
<name>IOLB_LISIN</name>
<accession>Q92EQ6</accession>
<protein>
    <recommendedName>
        <fullName evidence="1">5-deoxy-glucuronate isomerase</fullName>
        <shortName evidence="1">5DG isomerase</shortName>
        <ecNumber evidence="1">5.3.1.30</ecNumber>
    </recommendedName>
</protein>
<reference key="1">
    <citation type="journal article" date="2001" name="Science">
        <title>Comparative genomics of Listeria species.</title>
        <authorList>
            <person name="Glaser P."/>
            <person name="Frangeul L."/>
            <person name="Buchrieser C."/>
            <person name="Rusniok C."/>
            <person name="Amend A."/>
            <person name="Baquero F."/>
            <person name="Berche P."/>
            <person name="Bloecker H."/>
            <person name="Brandt P."/>
            <person name="Chakraborty T."/>
            <person name="Charbit A."/>
            <person name="Chetouani F."/>
            <person name="Couve E."/>
            <person name="de Daruvar A."/>
            <person name="Dehoux P."/>
            <person name="Domann E."/>
            <person name="Dominguez-Bernal G."/>
            <person name="Duchaud E."/>
            <person name="Durant L."/>
            <person name="Dussurget O."/>
            <person name="Entian K.-D."/>
            <person name="Fsihi H."/>
            <person name="Garcia-del Portillo F."/>
            <person name="Garrido P."/>
            <person name="Gautier L."/>
            <person name="Goebel W."/>
            <person name="Gomez-Lopez N."/>
            <person name="Hain T."/>
            <person name="Hauf J."/>
            <person name="Jackson D."/>
            <person name="Jones L.-M."/>
            <person name="Kaerst U."/>
            <person name="Kreft J."/>
            <person name="Kuhn M."/>
            <person name="Kunst F."/>
            <person name="Kurapkat G."/>
            <person name="Madueno E."/>
            <person name="Maitournam A."/>
            <person name="Mata Vicente J."/>
            <person name="Ng E."/>
            <person name="Nedjari H."/>
            <person name="Nordsiek G."/>
            <person name="Novella S."/>
            <person name="de Pablos B."/>
            <person name="Perez-Diaz J.-C."/>
            <person name="Purcell R."/>
            <person name="Remmel B."/>
            <person name="Rose M."/>
            <person name="Schlueter T."/>
            <person name="Simoes N."/>
            <person name="Tierrez A."/>
            <person name="Vazquez-Boland J.-A."/>
            <person name="Voss H."/>
            <person name="Wehland J."/>
            <person name="Cossart P."/>
        </authorList>
    </citation>
    <scope>NUCLEOTIDE SEQUENCE [LARGE SCALE GENOMIC DNA]</scope>
    <source>
        <strain>ATCC BAA-680 / CLIP 11262</strain>
    </source>
</reference>
<comment type="function">
    <text evidence="1">Involved in the isomerization of 5-deoxy-glucuronate (5DG) to 5-dehydro-2-deoxy-D-gluconate (DKG or 2-deoxy-5-keto-D-gluconate).</text>
</comment>
<comment type="catalytic activity">
    <reaction evidence="1">
        <text>5-deoxy-D-glucuronate = 5-dehydro-2-deoxy-D-gluconate</text>
        <dbReference type="Rhea" id="RHEA:25840"/>
        <dbReference type="ChEBI" id="CHEBI:16669"/>
        <dbReference type="ChEBI" id="CHEBI:58852"/>
        <dbReference type="EC" id="5.3.1.30"/>
    </reaction>
</comment>
<comment type="pathway">
    <text evidence="1">Polyol metabolism; myo-inositol degradation into acetyl-CoA; acetyl-CoA from myo-inositol: step 4/7.</text>
</comment>
<comment type="similarity">
    <text evidence="1">Belongs to the isomerase IolB family.</text>
</comment>